<sequence>MKKFINQFSASLKNNILVFLAFPFVWTSCARDNPLSSENSNISPNAAARAAVTGTTKANIKLFSFTEVNDTNPLNNLNFTLKNSGKPLVDMVVLFSANINYDAANDKVFVSNNPNVQHLLTNRAKYLKPLQDKGIKVILSILGNHDRSGIANLSTARAKAFAQELKNTCDLYNLDGVFFDDEYSAYQTPPPSGFVTPSNNAAARLAYETKQAMPNKLVTVYVYSRTSSFPTAVDGVNAGSYVDYAIHDYGGSYDLATNYPGLAKSGMVMSSQEFNQGRYATAQALRNIVTKGYGGHMIFAMDPNRSNFTSGQLPALKLIAKELYGDELVYSNTPYSKDW</sequence>
<gene>
    <name type="primary">endOF1</name>
</gene>
<dbReference type="EC" id="3.2.1.96"/>
<dbReference type="EMBL" id="M80793">
    <property type="protein sequence ID" value="AAA24922.1"/>
    <property type="molecule type" value="Genomic_DNA"/>
</dbReference>
<dbReference type="PIR" id="A42259">
    <property type="entry name" value="A42259"/>
</dbReference>
<dbReference type="PDB" id="2EBN">
    <property type="method" value="X-ray"/>
    <property type="resolution" value="2.00 A"/>
    <property type="chains" value="A=51-339"/>
</dbReference>
<dbReference type="PDBsum" id="2EBN"/>
<dbReference type="SMR" id="P36911"/>
<dbReference type="STRING" id="238.BBD35_09680"/>
<dbReference type="CAZy" id="GH18">
    <property type="family name" value="Glycoside Hydrolase Family 18"/>
</dbReference>
<dbReference type="EvolutionaryTrace" id="P36911"/>
<dbReference type="GO" id="GO:0005576">
    <property type="term" value="C:extracellular region"/>
    <property type="evidence" value="ECO:0007669"/>
    <property type="project" value="UniProtKB-SubCell"/>
</dbReference>
<dbReference type="GO" id="GO:0033925">
    <property type="term" value="F:mannosyl-glycoprotein endo-beta-N-acetylglucosaminidase activity"/>
    <property type="evidence" value="ECO:0007669"/>
    <property type="project" value="UniProtKB-EC"/>
</dbReference>
<dbReference type="GO" id="GO:0005975">
    <property type="term" value="P:carbohydrate metabolic process"/>
    <property type="evidence" value="ECO:0007669"/>
    <property type="project" value="InterPro"/>
</dbReference>
<dbReference type="CDD" id="cd06542">
    <property type="entry name" value="GH18_EndoS-like"/>
    <property type="match status" value="1"/>
</dbReference>
<dbReference type="Gene3D" id="3.20.20.80">
    <property type="entry name" value="Glycosidases"/>
    <property type="match status" value="1"/>
</dbReference>
<dbReference type="InterPro" id="IPR016289">
    <property type="entry name" value="Endo-Fsp"/>
</dbReference>
<dbReference type="InterPro" id="IPR001223">
    <property type="entry name" value="Glyco_hydro18_cat"/>
</dbReference>
<dbReference type="InterPro" id="IPR017853">
    <property type="entry name" value="Glycoside_hydrolase_SF"/>
</dbReference>
<dbReference type="Pfam" id="PF00704">
    <property type="entry name" value="Glyco_hydro_18"/>
    <property type="match status" value="1"/>
</dbReference>
<dbReference type="PIRSF" id="PIRSF001103">
    <property type="entry name" value="Endo-b-N-acetylglucosaminidase"/>
    <property type="match status" value="1"/>
</dbReference>
<dbReference type="SUPFAM" id="SSF51445">
    <property type="entry name" value="(Trans)glycosidases"/>
    <property type="match status" value="1"/>
</dbReference>
<dbReference type="PROSITE" id="PS51910">
    <property type="entry name" value="GH18_2"/>
    <property type="match status" value="1"/>
</dbReference>
<comment type="function">
    <text>Endohydrolysis of the di-N-acetylchitobiosyl unit in high-mannose glycopeptides and glycoproteins. Does not hydrolyze complex bi- or triantennary glycans. The presence of a core-bound fucose impedes endo F1 hydrolysis.</text>
</comment>
<comment type="catalytic activity">
    <reaction>
        <text>an N(4)-(oligosaccharide-(1-&gt;3)-[oligosaccharide-(1-&gt;6)]-beta-D-Man-(1-&gt;4)-beta-D-GlcNAc-(1-&gt;4)-alpha-D-GlcNAc)-L-asparaginyl-[protein] + H2O = an oligosaccharide-(1-&gt;3)-[oligosaccharide-(1-&gt;6)]-beta-D-Man-(1-&gt;4)-D-GlcNAc + N(4)-(N-acetyl-beta-D-glucosaminyl)-L-asparaginyl-[protein]</text>
        <dbReference type="Rhea" id="RHEA:73067"/>
        <dbReference type="Rhea" id="RHEA-COMP:12603"/>
        <dbReference type="Rhea" id="RHEA-COMP:18176"/>
        <dbReference type="ChEBI" id="CHEBI:15377"/>
        <dbReference type="ChEBI" id="CHEBI:132248"/>
        <dbReference type="ChEBI" id="CHEBI:192714"/>
        <dbReference type="ChEBI" id="CHEBI:192715"/>
        <dbReference type="EC" id="3.2.1.96"/>
    </reaction>
</comment>
<comment type="subunit">
    <text>Monomer.</text>
</comment>
<comment type="subcellular location">
    <subcellularLocation>
        <location>Secreted</location>
    </subcellularLocation>
</comment>
<comment type="similarity">
    <text evidence="3">Belongs to the glycosyl hydrolase 18 family.</text>
</comment>
<organism>
    <name type="scientific">Elizabethkingia meningoseptica</name>
    <name type="common">Chryseobacterium meningosepticum</name>
    <dbReference type="NCBI Taxonomy" id="238"/>
    <lineage>
        <taxon>Bacteria</taxon>
        <taxon>Pseudomonadati</taxon>
        <taxon>Bacteroidota</taxon>
        <taxon>Flavobacteriia</taxon>
        <taxon>Flavobacteriales</taxon>
        <taxon>Weeksellaceae</taxon>
        <taxon>Elizabethkingia</taxon>
    </lineage>
</organism>
<feature type="signal peptide" description="Or 51, or 52" evidence="2">
    <location>
        <begin position="1"/>
        <end position="50"/>
    </location>
</feature>
<feature type="chain" id="PRO_0000011954" description="Endo-beta-N-acetylglucosaminidase F1">
    <location>
        <begin position="51"/>
        <end position="338"/>
    </location>
</feature>
<feature type="propeptide" id="PRO_0000011955" description="Removed in mature form" evidence="3">
    <location>
        <position position="339"/>
    </location>
</feature>
<feature type="domain" description="GH18" evidence="1">
    <location>
        <begin position="60"/>
        <end position="326"/>
    </location>
</feature>
<feature type="active site" description="Proton donor" evidence="1">
    <location>
        <position position="182"/>
    </location>
</feature>
<feature type="strand" evidence="4">
    <location>
        <begin position="61"/>
        <end position="67"/>
    </location>
</feature>
<feature type="turn" evidence="4">
    <location>
        <begin position="68"/>
        <end position="70"/>
    </location>
</feature>
<feature type="helix" evidence="4">
    <location>
        <begin position="73"/>
        <end position="78"/>
    </location>
</feature>
<feature type="strand" evidence="4">
    <location>
        <begin position="79"/>
        <end position="81"/>
    </location>
</feature>
<feature type="turn" evidence="4">
    <location>
        <begin position="82"/>
        <end position="84"/>
    </location>
</feature>
<feature type="strand" evidence="4">
    <location>
        <begin position="91"/>
        <end position="102"/>
    </location>
</feature>
<feature type="turn" evidence="4">
    <location>
        <begin position="103"/>
        <end position="106"/>
    </location>
</feature>
<feature type="strand" evidence="4">
    <location>
        <begin position="107"/>
        <end position="111"/>
    </location>
</feature>
<feature type="helix" evidence="4">
    <location>
        <begin position="114"/>
        <end position="121"/>
    </location>
</feature>
<feature type="helix" evidence="4">
    <location>
        <begin position="123"/>
        <end position="126"/>
    </location>
</feature>
<feature type="helix" evidence="4">
    <location>
        <begin position="128"/>
        <end position="132"/>
    </location>
</feature>
<feature type="strand" evidence="4">
    <location>
        <begin position="136"/>
        <end position="142"/>
    </location>
</feature>
<feature type="strand" evidence="4">
    <location>
        <begin position="145"/>
        <end position="147"/>
    </location>
</feature>
<feature type="helix" evidence="4">
    <location>
        <begin position="155"/>
        <end position="172"/>
    </location>
</feature>
<feature type="strand" evidence="4">
    <location>
        <begin position="176"/>
        <end position="180"/>
    </location>
</feature>
<feature type="helix" evidence="4">
    <location>
        <begin position="199"/>
        <end position="212"/>
    </location>
</feature>
<feature type="strand" evidence="4">
    <location>
        <begin position="216"/>
        <end position="223"/>
    </location>
</feature>
<feature type="helix" evidence="4">
    <location>
        <begin position="224"/>
        <end position="226"/>
    </location>
</feature>
<feature type="helix" evidence="4">
    <location>
        <begin position="238"/>
        <end position="240"/>
    </location>
</feature>
<feature type="strand" evidence="4">
    <location>
        <begin position="243"/>
        <end position="247"/>
    </location>
</feature>
<feature type="turn" evidence="4">
    <location>
        <begin position="256"/>
        <end position="258"/>
    </location>
</feature>
<feature type="helix" evidence="4">
    <location>
        <begin position="264"/>
        <end position="266"/>
    </location>
</feature>
<feature type="strand" evidence="4">
    <location>
        <begin position="267"/>
        <end position="273"/>
    </location>
</feature>
<feature type="turn" evidence="4">
    <location>
        <begin position="274"/>
        <end position="277"/>
    </location>
</feature>
<feature type="helix" evidence="4">
    <location>
        <begin position="282"/>
        <end position="291"/>
    </location>
</feature>
<feature type="strand" evidence="4">
    <location>
        <begin position="295"/>
        <end position="299"/>
    </location>
</feature>
<feature type="turn" evidence="4">
    <location>
        <begin position="306"/>
        <end position="311"/>
    </location>
</feature>
<feature type="helix" evidence="4">
    <location>
        <begin position="312"/>
        <end position="324"/>
    </location>
</feature>
<feature type="strand" evidence="4">
    <location>
        <begin position="328"/>
        <end position="330"/>
    </location>
</feature>
<reference key="1">
    <citation type="journal article" date="1992" name="J. Biol. Chem.">
        <title>Multiple endoglycosidase (Endo) F activities expressed by Flavobacterium meningosepticum. Endo F1: molecular cloning, primary sequence, and structural relationship to Endo H.</title>
        <authorList>
            <person name="Tarentino A.L."/>
            <person name="Quinones G."/>
            <person name="Schrader W.P."/>
            <person name="Changchien L.-M."/>
            <person name="Plummer T.H. Jr."/>
        </authorList>
    </citation>
    <scope>NUCLEOTIDE SEQUENCE [GENOMIC DNA]</scope>
    <scope>PROTEIN SEQUENCE OF 51-77; 108-161 AND 265-338</scope>
</reference>
<reference key="2">
    <citation type="journal article" date="1994" name="Biochemistry">
        <title>Crystal structure of endo-beta-N-acetylglucosaminidase F1, an alpha/beta-barrel enzyme adapted for a complex substrate.</title>
        <authorList>
            <person name="van Roey P."/>
            <person name="Rao V."/>
            <person name="Plummer T.H. Jr."/>
            <person name="Tarentino A.L."/>
        </authorList>
    </citation>
    <scope>X-RAY CRYSTALLOGRAPHY (2.0 ANGSTROMS)</scope>
</reference>
<proteinExistence type="evidence at protein level"/>
<evidence type="ECO:0000255" key="1">
    <source>
        <dbReference type="PROSITE-ProRule" id="PRU01258"/>
    </source>
</evidence>
<evidence type="ECO:0000269" key="2">
    <source>
    </source>
</evidence>
<evidence type="ECO:0000305" key="3"/>
<evidence type="ECO:0007829" key="4">
    <source>
        <dbReference type="PDB" id="2EBN"/>
    </source>
</evidence>
<accession>P36911</accession>
<protein>
    <recommendedName>
        <fullName>Endo-beta-N-acetylglucosaminidase F1</fullName>
        <ecNumber>3.2.1.96</ecNumber>
    </recommendedName>
    <alternativeName>
        <fullName>Di-N-acetylchitobiosyl beta-N-acetylglucosaminidase F1</fullName>
    </alternativeName>
    <alternativeName>
        <fullName>Endoglycosidase F1</fullName>
    </alternativeName>
    <alternativeName>
        <fullName>Mannosyl-glycoprotein endo-beta-N-acetyl-glucosaminidase F1</fullName>
    </alternativeName>
</protein>
<keyword id="KW-0002">3D-structure</keyword>
<keyword id="KW-0903">Direct protein sequencing</keyword>
<keyword id="KW-0326">Glycosidase</keyword>
<keyword id="KW-0378">Hydrolase</keyword>
<keyword id="KW-0964">Secreted</keyword>
<keyword id="KW-0732">Signal</keyword>
<name>EBA1_ELIME</name>